<comment type="function">
    <text evidence="1">Catalyzes the reversible transfer of the terminal phosphate group between ATP and AMP. Plays an important role in cellular energy homeostasis and in adenine nucleotide metabolism.</text>
</comment>
<comment type="catalytic activity">
    <reaction evidence="1">
        <text>AMP + ATP = 2 ADP</text>
        <dbReference type="Rhea" id="RHEA:12973"/>
        <dbReference type="ChEBI" id="CHEBI:30616"/>
        <dbReference type="ChEBI" id="CHEBI:456215"/>
        <dbReference type="ChEBI" id="CHEBI:456216"/>
        <dbReference type="EC" id="2.7.4.3"/>
    </reaction>
</comment>
<comment type="pathway">
    <text evidence="1">Purine metabolism; AMP biosynthesis via salvage pathway; AMP from ADP: step 1/1.</text>
</comment>
<comment type="subunit">
    <text evidence="1">Monomer.</text>
</comment>
<comment type="subcellular location">
    <subcellularLocation>
        <location evidence="1">Cytoplasm</location>
    </subcellularLocation>
</comment>
<comment type="domain">
    <text evidence="1">Consists of three domains, a large central CORE domain and two small peripheral domains, NMPbind and LID, which undergo movements during catalysis. The LID domain closes over the site of phosphoryl transfer upon ATP binding. Assembling and dissambling the active center during each catalytic cycle provides an effective means to prevent ATP hydrolysis.</text>
</comment>
<comment type="similarity">
    <text evidence="1">Belongs to the adenylate kinase family.</text>
</comment>
<organism>
    <name type="scientific">Rhodococcus erythropolis (strain PR4 / NBRC 100887)</name>
    <dbReference type="NCBI Taxonomy" id="234621"/>
    <lineage>
        <taxon>Bacteria</taxon>
        <taxon>Bacillati</taxon>
        <taxon>Actinomycetota</taxon>
        <taxon>Actinomycetes</taxon>
        <taxon>Mycobacteriales</taxon>
        <taxon>Nocardiaceae</taxon>
        <taxon>Rhodococcus</taxon>
        <taxon>Rhodococcus erythropolis group</taxon>
    </lineage>
</organism>
<sequence length="181" mass="19501">MRLVLLGPPGAGKGTQAAILSEKFGVPHISTGDLFRANIGQATALGVEAKKYIDAGELVPSSITNDMVKARVAEPDAANGFLLDGFPRSVEQAQALEGILKDLDTRLDGVLSFVVDEDIVVERMLARGRADDTEDVIRNRLRVYRDETSPLFDYYKDSIVSVDAIGEVEEVNARALAALGK</sequence>
<evidence type="ECO:0000255" key="1">
    <source>
        <dbReference type="HAMAP-Rule" id="MF_00235"/>
    </source>
</evidence>
<feature type="chain" id="PRO_1000204424" description="Adenylate kinase">
    <location>
        <begin position="1"/>
        <end position="181"/>
    </location>
</feature>
<feature type="region of interest" description="NMP" evidence="1">
    <location>
        <begin position="30"/>
        <end position="59"/>
    </location>
</feature>
<feature type="region of interest" description="LID" evidence="1">
    <location>
        <begin position="126"/>
        <end position="132"/>
    </location>
</feature>
<feature type="binding site" evidence="1">
    <location>
        <begin position="10"/>
        <end position="15"/>
    </location>
    <ligand>
        <name>ATP</name>
        <dbReference type="ChEBI" id="CHEBI:30616"/>
    </ligand>
</feature>
<feature type="binding site" evidence="1">
    <location>
        <position position="31"/>
    </location>
    <ligand>
        <name>AMP</name>
        <dbReference type="ChEBI" id="CHEBI:456215"/>
    </ligand>
</feature>
<feature type="binding site" evidence="1">
    <location>
        <position position="36"/>
    </location>
    <ligand>
        <name>AMP</name>
        <dbReference type="ChEBI" id="CHEBI:456215"/>
    </ligand>
</feature>
<feature type="binding site" evidence="1">
    <location>
        <begin position="57"/>
        <end position="59"/>
    </location>
    <ligand>
        <name>AMP</name>
        <dbReference type="ChEBI" id="CHEBI:456215"/>
    </ligand>
</feature>
<feature type="binding site" evidence="1">
    <location>
        <begin position="85"/>
        <end position="88"/>
    </location>
    <ligand>
        <name>AMP</name>
        <dbReference type="ChEBI" id="CHEBI:456215"/>
    </ligand>
</feature>
<feature type="binding site" evidence="1">
    <location>
        <position position="92"/>
    </location>
    <ligand>
        <name>AMP</name>
        <dbReference type="ChEBI" id="CHEBI:456215"/>
    </ligand>
</feature>
<feature type="binding site" evidence="1">
    <location>
        <position position="127"/>
    </location>
    <ligand>
        <name>ATP</name>
        <dbReference type="ChEBI" id="CHEBI:30616"/>
    </ligand>
</feature>
<feature type="binding site" evidence="1">
    <location>
        <position position="129"/>
    </location>
    <ligand>
        <name>AMP</name>
        <dbReference type="ChEBI" id="CHEBI:456215"/>
    </ligand>
</feature>
<feature type="binding site" evidence="1">
    <location>
        <position position="140"/>
    </location>
    <ligand>
        <name>AMP</name>
        <dbReference type="ChEBI" id="CHEBI:456215"/>
    </ligand>
</feature>
<feature type="binding site" evidence="1">
    <location>
        <position position="166"/>
    </location>
    <ligand>
        <name>ATP</name>
        <dbReference type="ChEBI" id="CHEBI:30616"/>
    </ligand>
</feature>
<name>KAD_RHOE4</name>
<gene>
    <name evidence="1" type="primary">adk</name>
    <name type="ordered locus">RER_18740</name>
</gene>
<reference key="1">
    <citation type="submission" date="2005-03" db="EMBL/GenBank/DDBJ databases">
        <title>Comparison of the complete genome sequences of Rhodococcus erythropolis PR4 and Rhodococcus opacus B4.</title>
        <authorList>
            <person name="Takarada H."/>
            <person name="Sekine M."/>
            <person name="Hosoyama A."/>
            <person name="Yamada R."/>
            <person name="Fujisawa T."/>
            <person name="Omata S."/>
            <person name="Shimizu A."/>
            <person name="Tsukatani N."/>
            <person name="Tanikawa S."/>
            <person name="Fujita N."/>
            <person name="Harayama S."/>
        </authorList>
    </citation>
    <scope>NUCLEOTIDE SEQUENCE [LARGE SCALE GENOMIC DNA]</scope>
    <source>
        <strain>PR4 / NBRC 100887</strain>
    </source>
</reference>
<accession>C0ZW47</accession>
<protein>
    <recommendedName>
        <fullName evidence="1">Adenylate kinase</fullName>
        <shortName evidence="1">AK</shortName>
        <ecNumber evidence="1">2.7.4.3</ecNumber>
    </recommendedName>
    <alternativeName>
        <fullName evidence="1">ATP-AMP transphosphorylase</fullName>
    </alternativeName>
    <alternativeName>
        <fullName evidence="1">ATP:AMP phosphotransferase</fullName>
    </alternativeName>
    <alternativeName>
        <fullName evidence="1">Adenylate monophosphate kinase</fullName>
    </alternativeName>
</protein>
<dbReference type="EC" id="2.7.4.3" evidence="1"/>
<dbReference type="EMBL" id="AP008957">
    <property type="protein sequence ID" value="BAH32582.1"/>
    <property type="molecule type" value="Genomic_DNA"/>
</dbReference>
<dbReference type="RefSeq" id="WP_020906896.1">
    <property type="nucleotide sequence ID" value="NC_012490.1"/>
</dbReference>
<dbReference type="SMR" id="C0ZW47"/>
<dbReference type="KEGG" id="rer:RER_18740"/>
<dbReference type="PATRIC" id="fig|234621.6.peg.2369"/>
<dbReference type="eggNOG" id="COG0563">
    <property type="taxonomic scope" value="Bacteria"/>
</dbReference>
<dbReference type="HOGENOM" id="CLU_032354_4_1_11"/>
<dbReference type="UniPathway" id="UPA00588">
    <property type="reaction ID" value="UER00649"/>
</dbReference>
<dbReference type="Proteomes" id="UP000002204">
    <property type="component" value="Chromosome"/>
</dbReference>
<dbReference type="GO" id="GO:0005737">
    <property type="term" value="C:cytoplasm"/>
    <property type="evidence" value="ECO:0007669"/>
    <property type="project" value="UniProtKB-SubCell"/>
</dbReference>
<dbReference type="GO" id="GO:0004017">
    <property type="term" value="F:adenylate kinase activity"/>
    <property type="evidence" value="ECO:0007669"/>
    <property type="project" value="UniProtKB-UniRule"/>
</dbReference>
<dbReference type="GO" id="GO:0005524">
    <property type="term" value="F:ATP binding"/>
    <property type="evidence" value="ECO:0007669"/>
    <property type="project" value="UniProtKB-UniRule"/>
</dbReference>
<dbReference type="GO" id="GO:0044209">
    <property type="term" value="P:AMP salvage"/>
    <property type="evidence" value="ECO:0007669"/>
    <property type="project" value="UniProtKB-UniRule"/>
</dbReference>
<dbReference type="CDD" id="cd01428">
    <property type="entry name" value="ADK"/>
    <property type="match status" value="1"/>
</dbReference>
<dbReference type="Gene3D" id="3.40.50.300">
    <property type="entry name" value="P-loop containing nucleotide triphosphate hydrolases"/>
    <property type="match status" value="1"/>
</dbReference>
<dbReference type="HAMAP" id="MF_00235">
    <property type="entry name" value="Adenylate_kinase_Adk"/>
    <property type="match status" value="1"/>
</dbReference>
<dbReference type="InterPro" id="IPR000850">
    <property type="entry name" value="Adenylat/UMP-CMP_kin"/>
</dbReference>
<dbReference type="InterPro" id="IPR033690">
    <property type="entry name" value="Adenylat_kinase_CS"/>
</dbReference>
<dbReference type="InterPro" id="IPR027417">
    <property type="entry name" value="P-loop_NTPase"/>
</dbReference>
<dbReference type="NCBIfam" id="NF001381">
    <property type="entry name" value="PRK00279.1-3"/>
    <property type="match status" value="1"/>
</dbReference>
<dbReference type="NCBIfam" id="NF011100">
    <property type="entry name" value="PRK14527.1"/>
    <property type="match status" value="1"/>
</dbReference>
<dbReference type="NCBIfam" id="NF011104">
    <property type="entry name" value="PRK14531.1"/>
    <property type="match status" value="1"/>
</dbReference>
<dbReference type="PANTHER" id="PTHR23359">
    <property type="entry name" value="NUCLEOTIDE KINASE"/>
    <property type="match status" value="1"/>
</dbReference>
<dbReference type="Pfam" id="PF00406">
    <property type="entry name" value="ADK"/>
    <property type="match status" value="1"/>
</dbReference>
<dbReference type="PRINTS" id="PR00094">
    <property type="entry name" value="ADENYLTKNASE"/>
</dbReference>
<dbReference type="SUPFAM" id="SSF52540">
    <property type="entry name" value="P-loop containing nucleoside triphosphate hydrolases"/>
    <property type="match status" value="1"/>
</dbReference>
<dbReference type="PROSITE" id="PS00113">
    <property type="entry name" value="ADENYLATE_KINASE"/>
    <property type="match status" value="1"/>
</dbReference>
<proteinExistence type="inferred from homology"/>
<keyword id="KW-0067">ATP-binding</keyword>
<keyword id="KW-0963">Cytoplasm</keyword>
<keyword id="KW-0418">Kinase</keyword>
<keyword id="KW-0545">Nucleotide biosynthesis</keyword>
<keyword id="KW-0547">Nucleotide-binding</keyword>
<keyword id="KW-0808">Transferase</keyword>